<name>RBL_GLOC7</name>
<reference key="1">
    <citation type="journal article" date="2011" name="MBio">
        <title>Novel metabolic attributes of the genus Cyanothece, comprising a group of unicellular nitrogen-fixing Cyanobacteria.</title>
        <authorList>
            <person name="Bandyopadhyay A."/>
            <person name="Elvitigala T."/>
            <person name="Welsh E."/>
            <person name="Stockel J."/>
            <person name="Liberton M."/>
            <person name="Min H."/>
            <person name="Sherman L.A."/>
            <person name="Pakrasi H.B."/>
        </authorList>
    </citation>
    <scope>NUCLEOTIDE SEQUENCE [LARGE SCALE GENOMIC DNA]</scope>
    <source>
        <strain>PCC 7424</strain>
    </source>
</reference>
<organism>
    <name type="scientific">Gloeothece citriformis (strain PCC 7424)</name>
    <name type="common">Cyanothece sp. (strain PCC 7424)</name>
    <dbReference type="NCBI Taxonomy" id="65393"/>
    <lineage>
        <taxon>Bacteria</taxon>
        <taxon>Bacillati</taxon>
        <taxon>Cyanobacteriota</taxon>
        <taxon>Cyanophyceae</taxon>
        <taxon>Oscillatoriophycideae</taxon>
        <taxon>Chroococcales</taxon>
        <taxon>Aphanothecaceae</taxon>
        <taxon>Gloeothece</taxon>
        <taxon>Gloeothece citriformis</taxon>
    </lineage>
</organism>
<evidence type="ECO:0000255" key="1">
    <source>
        <dbReference type="HAMAP-Rule" id="MF_01338"/>
    </source>
</evidence>
<protein>
    <recommendedName>
        <fullName evidence="1">Ribulose bisphosphate carboxylase large chain</fullName>
        <shortName evidence="1">RuBisCO large subunit</shortName>
        <ecNumber evidence="1">4.1.1.39</ecNumber>
    </recommendedName>
</protein>
<proteinExistence type="inferred from homology"/>
<keyword id="KW-1283">Bacterial microcompartment</keyword>
<keyword id="KW-0113">Calvin cycle</keyword>
<keyword id="KW-0120">Carbon dioxide fixation</keyword>
<keyword id="KW-1282">Carboxysome</keyword>
<keyword id="KW-0456">Lyase</keyword>
<keyword id="KW-0460">Magnesium</keyword>
<keyword id="KW-0479">Metal-binding</keyword>
<keyword id="KW-0503">Monooxygenase</keyword>
<keyword id="KW-0560">Oxidoreductase</keyword>
<keyword id="KW-0601">Photorespiration</keyword>
<keyword id="KW-0602">Photosynthesis</keyword>
<keyword id="KW-1185">Reference proteome</keyword>
<sequence length="472" mass="52740">MVQSKAKAGFQAGVKDYRLTYYTPDYTPKDTDLLACFRVTPQPGVPPEEAGAAVAAESSTGTWTTVWTDGLTDLDRYKGRCYDIEPVPNEDNQYFCFVAYPLDLFEEGSVTNILTSIVGNVFGFKALRALRLEDIRFPVALLKTFQGPPHGITVERDKLNKYGRPLLGCTIKPKLGLSAKNYGRAVYECLRGGLDFTKDDENINSQPFMRWRDRFLFVQEAIEKSQAETNEIKGHYLNVTAGTLEEMMKRAEFAKEIKTPIIMHDYLTGGFTANTTLARWCRDNGVLLHIHRAMHAVIDRQKNHGIHFRVLAKCLRMSGGDHLHSGTVVGKLEGERGITMGFVDLMREDYVEEDRARGIFFTQDWASMPGVMPVASGGIHVWHMPALVEIFGDDSCLQFGGGTLGHPWGNAPGATANRVALEACIQARNEGRSLAREGNEVIREAARWSPELAAACELWKEIKFEFEAMDTL</sequence>
<accession>B7K7P3</accession>
<dbReference type="EC" id="4.1.1.39" evidence="1"/>
<dbReference type="EMBL" id="CP001291">
    <property type="protein sequence ID" value="ACK69811.1"/>
    <property type="molecule type" value="Genomic_DNA"/>
</dbReference>
<dbReference type="RefSeq" id="WP_012598757.1">
    <property type="nucleotide sequence ID" value="NC_011729.1"/>
</dbReference>
<dbReference type="SMR" id="B7K7P3"/>
<dbReference type="STRING" id="65393.PCC7424_1367"/>
<dbReference type="KEGG" id="cyc:PCC7424_1367"/>
<dbReference type="eggNOG" id="COG1850">
    <property type="taxonomic scope" value="Bacteria"/>
</dbReference>
<dbReference type="HOGENOM" id="CLU_031450_2_0_3"/>
<dbReference type="OrthoDB" id="9770811at2"/>
<dbReference type="Proteomes" id="UP000002384">
    <property type="component" value="Chromosome"/>
</dbReference>
<dbReference type="GO" id="GO:0031470">
    <property type="term" value="C:carboxysome"/>
    <property type="evidence" value="ECO:0007669"/>
    <property type="project" value="UniProtKB-SubCell"/>
</dbReference>
<dbReference type="GO" id="GO:0000287">
    <property type="term" value="F:magnesium ion binding"/>
    <property type="evidence" value="ECO:0007669"/>
    <property type="project" value="UniProtKB-UniRule"/>
</dbReference>
<dbReference type="GO" id="GO:0004497">
    <property type="term" value="F:monooxygenase activity"/>
    <property type="evidence" value="ECO:0007669"/>
    <property type="project" value="UniProtKB-KW"/>
</dbReference>
<dbReference type="GO" id="GO:0016984">
    <property type="term" value="F:ribulose-bisphosphate carboxylase activity"/>
    <property type="evidence" value="ECO:0007669"/>
    <property type="project" value="UniProtKB-UniRule"/>
</dbReference>
<dbReference type="GO" id="GO:0009853">
    <property type="term" value="P:photorespiration"/>
    <property type="evidence" value="ECO:0007669"/>
    <property type="project" value="UniProtKB-KW"/>
</dbReference>
<dbReference type="GO" id="GO:0019253">
    <property type="term" value="P:reductive pentose-phosphate cycle"/>
    <property type="evidence" value="ECO:0007669"/>
    <property type="project" value="UniProtKB-UniRule"/>
</dbReference>
<dbReference type="CDD" id="cd08212">
    <property type="entry name" value="RuBisCO_large_I"/>
    <property type="match status" value="1"/>
</dbReference>
<dbReference type="Gene3D" id="3.20.20.110">
    <property type="entry name" value="Ribulose bisphosphate carboxylase, large subunit, C-terminal domain"/>
    <property type="match status" value="1"/>
</dbReference>
<dbReference type="Gene3D" id="3.30.70.150">
    <property type="entry name" value="RuBisCO large subunit, N-terminal domain"/>
    <property type="match status" value="1"/>
</dbReference>
<dbReference type="HAMAP" id="MF_01338">
    <property type="entry name" value="RuBisCO_L_type1"/>
    <property type="match status" value="1"/>
</dbReference>
<dbReference type="InterPro" id="IPR033966">
    <property type="entry name" value="RuBisCO"/>
</dbReference>
<dbReference type="InterPro" id="IPR020878">
    <property type="entry name" value="RuBisCo_large_chain_AS"/>
</dbReference>
<dbReference type="InterPro" id="IPR000685">
    <property type="entry name" value="RuBisCO_lsu_C"/>
</dbReference>
<dbReference type="InterPro" id="IPR036376">
    <property type="entry name" value="RuBisCO_lsu_C_sf"/>
</dbReference>
<dbReference type="InterPro" id="IPR017443">
    <property type="entry name" value="RuBisCO_lsu_fd_N"/>
</dbReference>
<dbReference type="InterPro" id="IPR036422">
    <property type="entry name" value="RuBisCO_lsu_N_sf"/>
</dbReference>
<dbReference type="InterPro" id="IPR020888">
    <property type="entry name" value="RuBisCO_lsuI"/>
</dbReference>
<dbReference type="NCBIfam" id="NF003252">
    <property type="entry name" value="PRK04208.1"/>
    <property type="match status" value="1"/>
</dbReference>
<dbReference type="PANTHER" id="PTHR42704">
    <property type="entry name" value="RIBULOSE BISPHOSPHATE CARBOXYLASE"/>
    <property type="match status" value="1"/>
</dbReference>
<dbReference type="PANTHER" id="PTHR42704:SF17">
    <property type="entry name" value="RIBULOSE BISPHOSPHATE CARBOXYLASE LARGE CHAIN"/>
    <property type="match status" value="1"/>
</dbReference>
<dbReference type="Pfam" id="PF00016">
    <property type="entry name" value="RuBisCO_large"/>
    <property type="match status" value="1"/>
</dbReference>
<dbReference type="Pfam" id="PF02788">
    <property type="entry name" value="RuBisCO_large_N"/>
    <property type="match status" value="1"/>
</dbReference>
<dbReference type="SFLD" id="SFLDG01052">
    <property type="entry name" value="RuBisCO"/>
    <property type="match status" value="1"/>
</dbReference>
<dbReference type="SFLD" id="SFLDS00014">
    <property type="entry name" value="RuBisCO"/>
    <property type="match status" value="1"/>
</dbReference>
<dbReference type="SFLD" id="SFLDG00301">
    <property type="entry name" value="RuBisCO-like_proteins"/>
    <property type="match status" value="1"/>
</dbReference>
<dbReference type="SUPFAM" id="SSF51649">
    <property type="entry name" value="RuBisCo, C-terminal domain"/>
    <property type="match status" value="1"/>
</dbReference>
<dbReference type="SUPFAM" id="SSF54966">
    <property type="entry name" value="RuBisCO, large subunit, small (N-terminal) domain"/>
    <property type="match status" value="1"/>
</dbReference>
<dbReference type="PROSITE" id="PS00157">
    <property type="entry name" value="RUBISCO_LARGE"/>
    <property type="match status" value="1"/>
</dbReference>
<gene>
    <name evidence="1" type="primary">cbbL</name>
    <name evidence="1" type="synonym">rbcL</name>
    <name type="ordered locus">PCC7424_1367</name>
</gene>
<comment type="function">
    <text evidence="1">RuBisCO catalyzes two reactions: the carboxylation of D-ribulose 1,5-bisphosphate, the primary event in carbon dioxide fixation, as well as the oxidative fragmentation of the pentose substrate in the photorespiration process. Both reactions occur simultaneously and in competition at the same active site.</text>
</comment>
<comment type="catalytic activity">
    <reaction evidence="1">
        <text>2 (2R)-3-phosphoglycerate + 2 H(+) = D-ribulose 1,5-bisphosphate + CO2 + H2O</text>
        <dbReference type="Rhea" id="RHEA:23124"/>
        <dbReference type="ChEBI" id="CHEBI:15377"/>
        <dbReference type="ChEBI" id="CHEBI:15378"/>
        <dbReference type="ChEBI" id="CHEBI:16526"/>
        <dbReference type="ChEBI" id="CHEBI:57870"/>
        <dbReference type="ChEBI" id="CHEBI:58272"/>
        <dbReference type="EC" id="4.1.1.39"/>
    </reaction>
</comment>
<comment type="catalytic activity">
    <reaction evidence="1">
        <text>D-ribulose 1,5-bisphosphate + O2 = 2-phosphoglycolate + (2R)-3-phosphoglycerate + 2 H(+)</text>
        <dbReference type="Rhea" id="RHEA:36631"/>
        <dbReference type="ChEBI" id="CHEBI:15378"/>
        <dbReference type="ChEBI" id="CHEBI:15379"/>
        <dbReference type="ChEBI" id="CHEBI:57870"/>
        <dbReference type="ChEBI" id="CHEBI:58033"/>
        <dbReference type="ChEBI" id="CHEBI:58272"/>
    </reaction>
</comment>
<comment type="cofactor">
    <cofactor evidence="1">
        <name>Mg(2+)</name>
        <dbReference type="ChEBI" id="CHEBI:18420"/>
    </cofactor>
    <text evidence="1">Binds 1 Mg(2+) ion per subunit.</text>
</comment>
<comment type="subunit">
    <text evidence="1">Heterohexadecamer of 8 large chains and 8 small chains.</text>
</comment>
<comment type="subcellular location">
    <subcellularLocation>
        <location evidence="1">Carboxysome</location>
    </subcellularLocation>
</comment>
<comment type="miscellaneous">
    <text evidence="1">The basic functional RuBisCO is composed of a large chain homodimer in a 'head-to-tail' conformation. In form I RuBisCO this homodimer is arranged in a barrel-like tetramer with the small subunits forming a tetrameric 'cap' on each end of the 'barrel'.</text>
</comment>
<comment type="similarity">
    <text evidence="1">Belongs to the RuBisCO large chain family. Type I subfamily.</text>
</comment>
<feature type="chain" id="PRO_1000142749" description="Ribulose bisphosphate carboxylase large chain">
    <location>
        <begin position="1"/>
        <end position="472"/>
    </location>
</feature>
<feature type="active site" description="Proton acceptor" evidence="1">
    <location>
        <position position="172"/>
    </location>
</feature>
<feature type="active site" description="Proton acceptor" evidence="1">
    <location>
        <position position="291"/>
    </location>
</feature>
<feature type="binding site" description="in homodimeric partner" evidence="1">
    <location>
        <position position="120"/>
    </location>
    <ligand>
        <name>substrate</name>
    </ligand>
</feature>
<feature type="binding site" evidence="1">
    <location>
        <position position="170"/>
    </location>
    <ligand>
        <name>substrate</name>
    </ligand>
</feature>
<feature type="binding site" evidence="1">
    <location>
        <position position="174"/>
    </location>
    <ligand>
        <name>substrate</name>
    </ligand>
</feature>
<feature type="binding site" description="via carbamate group" evidence="1">
    <location>
        <position position="198"/>
    </location>
    <ligand>
        <name>Mg(2+)</name>
        <dbReference type="ChEBI" id="CHEBI:18420"/>
    </ligand>
</feature>
<feature type="binding site" evidence="1">
    <location>
        <position position="200"/>
    </location>
    <ligand>
        <name>Mg(2+)</name>
        <dbReference type="ChEBI" id="CHEBI:18420"/>
    </ligand>
</feature>
<feature type="binding site" evidence="1">
    <location>
        <position position="201"/>
    </location>
    <ligand>
        <name>Mg(2+)</name>
        <dbReference type="ChEBI" id="CHEBI:18420"/>
    </ligand>
</feature>
<feature type="binding site" evidence="1">
    <location>
        <position position="292"/>
    </location>
    <ligand>
        <name>substrate</name>
    </ligand>
</feature>
<feature type="binding site" evidence="1">
    <location>
        <position position="324"/>
    </location>
    <ligand>
        <name>substrate</name>
    </ligand>
</feature>
<feature type="binding site" evidence="1">
    <location>
        <position position="376"/>
    </location>
    <ligand>
        <name>substrate</name>
    </ligand>
</feature>
<feature type="site" description="Transition state stabilizer" evidence="1">
    <location>
        <position position="331"/>
    </location>
</feature>
<feature type="modified residue" description="N6-carboxylysine" evidence="1">
    <location>
        <position position="198"/>
    </location>
</feature>